<comment type="function">
    <text evidence="3">Involved in dynein arm assembly, is important for expression and transporting outer dynein arm (ODA) proteins from the cytoplasm to the cilia.</text>
</comment>
<comment type="subcellular location">
    <subcellularLocation>
        <location evidence="3">Cytoplasm</location>
    </subcellularLocation>
    <subcellularLocation>
        <location evidence="3">Cell projection</location>
        <location evidence="3">Cilium</location>
    </subcellularLocation>
    <subcellularLocation>
        <location evidence="1">Dynein axonemal particle</location>
    </subcellularLocation>
    <subcellularLocation>
        <location evidence="3">Cell projection</location>
        <location evidence="3">Cilium</location>
        <location evidence="3">Flagellum</location>
    </subcellularLocation>
    <text evidence="2">Localized to cytoplasmic puncta in ciliated cells. In the semicircular canal, localized to kinocilia (By similarity).</text>
</comment>
<comment type="similarity">
    <text evidence="6">Belongs to the tilB family.</text>
</comment>
<sequence length="470" mass="54621">MVRVSEDLIRRRAEHNNCEIFSLEEISLHQQDLERIEYIDKWCRELKILYLQNNLIGKIENVSKLKKLEYLNLALNNIEKIENLEGCESLQKLDLTVNFVGDLSSINSLQENRQLREFYLVGNPCAEYEGYRQYVVATLPQLKWLDGKEIERSERIQAAQDYPQVQGKIKEQEEAYLRKRAAEREKATNNLQQKQKEGRKAQEKKPGFDRRWYTDINNTIPDPVEKTDTVAQLNVDETALRNDDEEEEKEFWNQPSQYTPESRLETHRYLEEKRKSKENRSEEELKKKPPRTLITAEGRVLNVNESKLDFSLVDDEENNQFVLDLAIYRHLDTSLLDVDVQPGYIKVLVKEKPFQLVLPAEVKPDSSAAKRSQTTGHLVVTMPKATEMIQTKRAKSPAIAERTCKNPQKCLKTHEKLEVDPKARSIPDVANIVQEKKTWAQGPLRLHRNSARDTADSEDFIDNAEVPPLV</sequence>
<evidence type="ECO:0000250" key="1">
    <source>
        <dbReference type="UniProtKB" id="A0A1L8G016"/>
    </source>
</evidence>
<evidence type="ECO:0000250" key="2">
    <source>
        <dbReference type="UniProtKB" id="B3DH20"/>
    </source>
</evidence>
<evidence type="ECO:0000250" key="3">
    <source>
        <dbReference type="UniProtKB" id="Q86X45"/>
    </source>
</evidence>
<evidence type="ECO:0000255" key="4"/>
<evidence type="ECO:0000256" key="5">
    <source>
        <dbReference type="SAM" id="MobiDB-lite"/>
    </source>
</evidence>
<evidence type="ECO:0000305" key="6"/>
<name>DAA11_XENTR</name>
<accession>Q28FY0</accession>
<accession>Q6P345</accession>
<dbReference type="EMBL" id="CR761682">
    <property type="protein sequence ID" value="CAJ83438.1"/>
    <property type="molecule type" value="mRNA"/>
</dbReference>
<dbReference type="EMBL" id="AAMC01093643">
    <property type="status" value="NOT_ANNOTATED_CDS"/>
    <property type="molecule type" value="Genomic_DNA"/>
</dbReference>
<dbReference type="EMBL" id="AAMC01093644">
    <property type="status" value="NOT_ANNOTATED_CDS"/>
    <property type="molecule type" value="Genomic_DNA"/>
</dbReference>
<dbReference type="EMBL" id="AAMC01093645">
    <property type="status" value="NOT_ANNOTATED_CDS"/>
    <property type="molecule type" value="Genomic_DNA"/>
</dbReference>
<dbReference type="EMBL" id="AAMC01093646">
    <property type="status" value="NOT_ANNOTATED_CDS"/>
    <property type="molecule type" value="Genomic_DNA"/>
</dbReference>
<dbReference type="EMBL" id="AAMC01093647">
    <property type="status" value="NOT_ANNOTATED_CDS"/>
    <property type="molecule type" value="Genomic_DNA"/>
</dbReference>
<dbReference type="EMBL" id="AAMC01093648">
    <property type="status" value="NOT_ANNOTATED_CDS"/>
    <property type="molecule type" value="Genomic_DNA"/>
</dbReference>
<dbReference type="EMBL" id="AAMC01093649">
    <property type="status" value="NOT_ANNOTATED_CDS"/>
    <property type="molecule type" value="Genomic_DNA"/>
</dbReference>
<dbReference type="EMBL" id="AAMC01093650">
    <property type="status" value="NOT_ANNOTATED_CDS"/>
    <property type="molecule type" value="Genomic_DNA"/>
</dbReference>
<dbReference type="EMBL" id="AAMC01093651">
    <property type="status" value="NOT_ANNOTATED_CDS"/>
    <property type="molecule type" value="Genomic_DNA"/>
</dbReference>
<dbReference type="EMBL" id="AAMC01093652">
    <property type="status" value="NOT_ANNOTATED_CDS"/>
    <property type="molecule type" value="Genomic_DNA"/>
</dbReference>
<dbReference type="EMBL" id="AAMC01093653">
    <property type="status" value="NOT_ANNOTATED_CDS"/>
    <property type="molecule type" value="Genomic_DNA"/>
</dbReference>
<dbReference type="EMBL" id="AAMC01093654">
    <property type="status" value="NOT_ANNOTATED_CDS"/>
    <property type="molecule type" value="Genomic_DNA"/>
</dbReference>
<dbReference type="EMBL" id="BC064188">
    <property type="protein sequence ID" value="AAH64188.1"/>
    <property type="molecule type" value="mRNA"/>
</dbReference>
<dbReference type="RefSeq" id="NP_001032332.1">
    <property type="nucleotide sequence ID" value="NM_001037255.1"/>
</dbReference>
<dbReference type="SMR" id="Q28FY0"/>
<dbReference type="FunCoup" id="Q28FY0">
    <property type="interactions" value="119"/>
</dbReference>
<dbReference type="STRING" id="8364.ENSXETP00000046546"/>
<dbReference type="PaxDb" id="8364-ENSXETP00000049805"/>
<dbReference type="GeneID" id="394985"/>
<dbReference type="KEGG" id="xtr:394985"/>
<dbReference type="AGR" id="Xenbase:XB-GENE-946667"/>
<dbReference type="CTD" id="23639"/>
<dbReference type="Xenbase" id="XB-GENE-946667">
    <property type="gene designation" value="dnaaf11"/>
</dbReference>
<dbReference type="eggNOG" id="KOG0531">
    <property type="taxonomic scope" value="Eukaryota"/>
</dbReference>
<dbReference type="HOGENOM" id="CLU_034806_0_1_1"/>
<dbReference type="InParanoid" id="Q28FY0"/>
<dbReference type="OMA" id="QHRAVIV"/>
<dbReference type="OrthoDB" id="10250990at2759"/>
<dbReference type="PhylomeDB" id="Q28FY0"/>
<dbReference type="TreeFam" id="TF324815"/>
<dbReference type="Proteomes" id="UP000008143">
    <property type="component" value="Chromosome 6"/>
</dbReference>
<dbReference type="Bgee" id="ENSXETG00000023039">
    <property type="expression patterns" value="Expressed in testis and 12 other cell types or tissues"/>
</dbReference>
<dbReference type="GO" id="GO:0005737">
    <property type="term" value="C:cytoplasm"/>
    <property type="evidence" value="ECO:0000250"/>
    <property type="project" value="UniProtKB"/>
</dbReference>
<dbReference type="GO" id="GO:0005829">
    <property type="term" value="C:cytosol"/>
    <property type="evidence" value="ECO:0000250"/>
    <property type="project" value="UniProtKB"/>
</dbReference>
<dbReference type="GO" id="GO:0120293">
    <property type="term" value="C:dynein axonemal particle"/>
    <property type="evidence" value="ECO:0000250"/>
    <property type="project" value="UniProtKB"/>
</dbReference>
<dbReference type="GO" id="GO:0005576">
    <property type="term" value="C:extracellular region"/>
    <property type="evidence" value="ECO:0007669"/>
    <property type="project" value="GOC"/>
</dbReference>
<dbReference type="GO" id="GO:0031514">
    <property type="term" value="C:motile cilium"/>
    <property type="evidence" value="ECO:0007669"/>
    <property type="project" value="UniProtKB-SubCell"/>
</dbReference>
<dbReference type="GO" id="GO:0070286">
    <property type="term" value="P:axonemal dynein complex assembly"/>
    <property type="evidence" value="ECO:0000250"/>
    <property type="project" value="UniProtKB"/>
</dbReference>
<dbReference type="GO" id="GO:0090660">
    <property type="term" value="P:cerebrospinal fluid circulation"/>
    <property type="evidence" value="ECO:0000250"/>
    <property type="project" value="UniProtKB"/>
</dbReference>
<dbReference type="GO" id="GO:0060287">
    <property type="term" value="P:epithelial cilium movement involved in determination of left/right asymmetry"/>
    <property type="evidence" value="ECO:0000250"/>
    <property type="project" value="UniProtKB"/>
</dbReference>
<dbReference type="GO" id="GO:0003351">
    <property type="term" value="P:epithelial cilium movement involved in extracellular fluid movement"/>
    <property type="evidence" value="ECO:0000250"/>
    <property type="project" value="UniProtKB"/>
</dbReference>
<dbReference type="GO" id="GO:0051649">
    <property type="term" value="P:establishment of localization in cell"/>
    <property type="evidence" value="ECO:0000250"/>
    <property type="project" value="UniProtKB"/>
</dbReference>
<dbReference type="GO" id="GO:0030317">
    <property type="term" value="P:flagellated sperm motility"/>
    <property type="evidence" value="ECO:0000250"/>
    <property type="project" value="UniProtKB"/>
</dbReference>
<dbReference type="GO" id="GO:0036158">
    <property type="term" value="P:outer dynein arm assembly"/>
    <property type="evidence" value="ECO:0000250"/>
    <property type="project" value="UniProtKB"/>
</dbReference>
<dbReference type="GO" id="GO:0061512">
    <property type="term" value="P:protein localization to cilium"/>
    <property type="evidence" value="ECO:0000250"/>
    <property type="project" value="UniProtKB"/>
</dbReference>
<dbReference type="GO" id="GO:0120229">
    <property type="term" value="P:protein localization to motile cilium"/>
    <property type="evidence" value="ECO:0000250"/>
    <property type="project" value="UniProtKB"/>
</dbReference>
<dbReference type="FunFam" id="3.80.10.10:FF:000052">
    <property type="entry name" value="Leucine rich repeat containing 6"/>
    <property type="match status" value="1"/>
</dbReference>
<dbReference type="Gene3D" id="3.80.10.10">
    <property type="entry name" value="Ribonuclease Inhibitor"/>
    <property type="match status" value="1"/>
</dbReference>
<dbReference type="InterPro" id="IPR056496">
    <property type="entry name" value="CS_DNAAF11_C"/>
</dbReference>
<dbReference type="InterPro" id="IPR001611">
    <property type="entry name" value="Leu-rich_rpt"/>
</dbReference>
<dbReference type="InterPro" id="IPR032675">
    <property type="entry name" value="LRR_dom_sf"/>
</dbReference>
<dbReference type="InterPro" id="IPR003603">
    <property type="entry name" value="U2A'_phosphoprotein32A_C"/>
</dbReference>
<dbReference type="PANTHER" id="PTHR18849:SF0">
    <property type="entry name" value="CILIA- AND FLAGELLA-ASSOCIATED PROTEIN 410-RELATED"/>
    <property type="match status" value="1"/>
</dbReference>
<dbReference type="PANTHER" id="PTHR18849">
    <property type="entry name" value="LEUCINE RICH REPEAT PROTEIN"/>
    <property type="match status" value="1"/>
</dbReference>
<dbReference type="Pfam" id="PF23602">
    <property type="entry name" value="CS_DNAAF11_C"/>
    <property type="match status" value="1"/>
</dbReference>
<dbReference type="Pfam" id="PF14580">
    <property type="entry name" value="LRR_9"/>
    <property type="match status" value="1"/>
</dbReference>
<dbReference type="SMART" id="SM00365">
    <property type="entry name" value="LRR_SD22"/>
    <property type="match status" value="2"/>
</dbReference>
<dbReference type="SMART" id="SM00446">
    <property type="entry name" value="LRRcap"/>
    <property type="match status" value="1"/>
</dbReference>
<dbReference type="SUPFAM" id="SSF52058">
    <property type="entry name" value="L domain-like"/>
    <property type="match status" value="1"/>
</dbReference>
<dbReference type="PROSITE" id="PS51450">
    <property type="entry name" value="LRR"/>
    <property type="match status" value="4"/>
</dbReference>
<organism>
    <name type="scientific">Xenopus tropicalis</name>
    <name type="common">Western clawed frog</name>
    <name type="synonym">Silurana tropicalis</name>
    <dbReference type="NCBI Taxonomy" id="8364"/>
    <lineage>
        <taxon>Eukaryota</taxon>
        <taxon>Metazoa</taxon>
        <taxon>Chordata</taxon>
        <taxon>Craniata</taxon>
        <taxon>Vertebrata</taxon>
        <taxon>Euteleostomi</taxon>
        <taxon>Amphibia</taxon>
        <taxon>Batrachia</taxon>
        <taxon>Anura</taxon>
        <taxon>Pipoidea</taxon>
        <taxon>Pipidae</taxon>
        <taxon>Xenopodinae</taxon>
        <taxon>Xenopus</taxon>
        <taxon>Silurana</taxon>
    </lineage>
</organism>
<protein>
    <recommendedName>
        <fullName evidence="6">Dynein axonemal assembly factor 11</fullName>
        <shortName evidence="6">DNAAF11</shortName>
    </recommendedName>
    <alternativeName>
        <fullName>Leucine-rich repeat-containing protein 6</fullName>
    </alternativeName>
    <alternativeName>
        <fullName>Protein tilB homolog</fullName>
    </alternativeName>
</protein>
<keyword id="KW-0966">Cell projection</keyword>
<keyword id="KW-0969">Cilium</keyword>
<keyword id="KW-0175">Coiled coil</keyword>
<keyword id="KW-0963">Cytoplasm</keyword>
<keyword id="KW-0282">Flagellum</keyword>
<keyword id="KW-0433">Leucine-rich repeat</keyword>
<keyword id="KW-1185">Reference proteome</keyword>
<keyword id="KW-0677">Repeat</keyword>
<proteinExistence type="evidence at transcript level"/>
<feature type="chain" id="PRO_0000414860" description="Dynein axonemal assembly factor 11">
    <location>
        <begin position="1"/>
        <end position="470"/>
    </location>
</feature>
<feature type="repeat" description="LRR 1">
    <location>
        <begin position="20"/>
        <end position="43"/>
    </location>
</feature>
<feature type="repeat" description="LRR 2">
    <location>
        <begin position="44"/>
        <end position="65"/>
    </location>
</feature>
<feature type="repeat" description="LRR 3">
    <location>
        <begin position="66"/>
        <end position="89"/>
    </location>
</feature>
<feature type="repeat" description="LRR 4">
    <location>
        <begin position="90"/>
        <end position="110"/>
    </location>
</feature>
<feature type="domain" description="LRRCT">
    <location>
        <begin position="128"/>
        <end position="146"/>
    </location>
</feature>
<feature type="domain" description="CS">
    <location>
        <begin position="303"/>
        <end position="395"/>
    </location>
</feature>
<feature type="region of interest" description="Disordered" evidence="5">
    <location>
        <begin position="182"/>
        <end position="265"/>
    </location>
</feature>
<feature type="region of interest" description="Disordered" evidence="5">
    <location>
        <begin position="447"/>
        <end position="470"/>
    </location>
</feature>
<feature type="coiled-coil region" evidence="4">
    <location>
        <begin position="177"/>
        <end position="288"/>
    </location>
</feature>
<feature type="compositionally biased region" description="Basic and acidic residues" evidence="5">
    <location>
        <begin position="194"/>
        <end position="213"/>
    </location>
</feature>
<gene>
    <name type="primary">dnaaf11</name>
    <name type="synonym">lrrc6</name>
    <name type="ORF">TGas012h22.1</name>
</gene>
<reference key="1">
    <citation type="submission" date="2006-10" db="EMBL/GenBank/DDBJ databases">
        <authorList>
            <consortium name="Sanger Xenopus tropicalis EST/cDNA project"/>
        </authorList>
    </citation>
    <scope>NUCLEOTIDE SEQUENCE [LARGE SCALE MRNA]</scope>
    <source>
        <tissue>Gastrula</tissue>
    </source>
</reference>
<reference key="2">
    <citation type="journal article" date="2010" name="Science">
        <title>The genome of the Western clawed frog Xenopus tropicalis.</title>
        <authorList>
            <person name="Hellsten U."/>
            <person name="Harland R.M."/>
            <person name="Gilchrist M.J."/>
            <person name="Hendrix D."/>
            <person name="Jurka J."/>
            <person name="Kapitonov V."/>
            <person name="Ovcharenko I."/>
            <person name="Putnam N.H."/>
            <person name="Shu S."/>
            <person name="Taher L."/>
            <person name="Blitz I.L."/>
            <person name="Blumberg B."/>
            <person name="Dichmann D.S."/>
            <person name="Dubchak I."/>
            <person name="Amaya E."/>
            <person name="Detter J.C."/>
            <person name="Fletcher R."/>
            <person name="Gerhard D.S."/>
            <person name="Goodstein D."/>
            <person name="Graves T."/>
            <person name="Grigoriev I.V."/>
            <person name="Grimwood J."/>
            <person name="Kawashima T."/>
            <person name="Lindquist E."/>
            <person name="Lucas S.M."/>
            <person name="Mead P.E."/>
            <person name="Mitros T."/>
            <person name="Ogino H."/>
            <person name="Ohta Y."/>
            <person name="Poliakov A.V."/>
            <person name="Pollet N."/>
            <person name="Robert J."/>
            <person name="Salamov A."/>
            <person name="Sater A.K."/>
            <person name="Schmutz J."/>
            <person name="Terry A."/>
            <person name="Vize P.D."/>
            <person name="Warren W.C."/>
            <person name="Wells D."/>
            <person name="Wills A."/>
            <person name="Wilson R.K."/>
            <person name="Zimmerman L.B."/>
            <person name="Zorn A.M."/>
            <person name="Grainger R."/>
            <person name="Grammer T."/>
            <person name="Khokha M.K."/>
            <person name="Richardson P.M."/>
            <person name="Rokhsar D.S."/>
        </authorList>
    </citation>
    <scope>NUCLEOTIDE SEQUENCE [LARGE SCALE GENOMIC DNA]</scope>
</reference>
<reference key="3">
    <citation type="submission" date="2003-12" db="EMBL/GenBank/DDBJ databases">
        <authorList>
            <consortium name="NIH - Xenopus Gene Collection (XGC) project"/>
        </authorList>
    </citation>
    <scope>NUCLEOTIDE SEQUENCE [LARGE SCALE MRNA] OF 2-470</scope>
    <source>
        <tissue>Embryo</tissue>
    </source>
</reference>